<reference key="1">
    <citation type="journal article" date="1997" name="Microbiology">
        <title>Sequencing and functional annotation of the Bacillus subtilis genes in the 200 kb rrnB-dnaB region.</title>
        <authorList>
            <person name="Lapidus A."/>
            <person name="Galleron N."/>
            <person name="Sorokin A."/>
            <person name="Ehrlich S.D."/>
        </authorList>
    </citation>
    <scope>NUCLEOTIDE SEQUENCE [GENOMIC DNA]</scope>
</reference>
<reference key="2">
    <citation type="journal article" date="1997" name="Nature">
        <title>The complete genome sequence of the Gram-positive bacterium Bacillus subtilis.</title>
        <authorList>
            <person name="Kunst F."/>
            <person name="Ogasawara N."/>
            <person name="Moszer I."/>
            <person name="Albertini A.M."/>
            <person name="Alloni G."/>
            <person name="Azevedo V."/>
            <person name="Bertero M.G."/>
            <person name="Bessieres P."/>
            <person name="Bolotin A."/>
            <person name="Borchert S."/>
            <person name="Borriss R."/>
            <person name="Boursier L."/>
            <person name="Brans A."/>
            <person name="Braun M."/>
            <person name="Brignell S.C."/>
            <person name="Bron S."/>
            <person name="Brouillet S."/>
            <person name="Bruschi C.V."/>
            <person name="Caldwell B."/>
            <person name="Capuano V."/>
            <person name="Carter N.M."/>
            <person name="Choi S.-K."/>
            <person name="Codani J.-J."/>
            <person name="Connerton I.F."/>
            <person name="Cummings N.J."/>
            <person name="Daniel R.A."/>
            <person name="Denizot F."/>
            <person name="Devine K.M."/>
            <person name="Duesterhoeft A."/>
            <person name="Ehrlich S.D."/>
            <person name="Emmerson P.T."/>
            <person name="Entian K.-D."/>
            <person name="Errington J."/>
            <person name="Fabret C."/>
            <person name="Ferrari E."/>
            <person name="Foulger D."/>
            <person name="Fritz C."/>
            <person name="Fujita M."/>
            <person name="Fujita Y."/>
            <person name="Fuma S."/>
            <person name="Galizzi A."/>
            <person name="Galleron N."/>
            <person name="Ghim S.-Y."/>
            <person name="Glaser P."/>
            <person name="Goffeau A."/>
            <person name="Golightly E.J."/>
            <person name="Grandi G."/>
            <person name="Guiseppi G."/>
            <person name="Guy B.J."/>
            <person name="Haga K."/>
            <person name="Haiech J."/>
            <person name="Harwood C.R."/>
            <person name="Henaut A."/>
            <person name="Hilbert H."/>
            <person name="Holsappel S."/>
            <person name="Hosono S."/>
            <person name="Hullo M.-F."/>
            <person name="Itaya M."/>
            <person name="Jones L.-M."/>
            <person name="Joris B."/>
            <person name="Karamata D."/>
            <person name="Kasahara Y."/>
            <person name="Klaerr-Blanchard M."/>
            <person name="Klein C."/>
            <person name="Kobayashi Y."/>
            <person name="Koetter P."/>
            <person name="Koningstein G."/>
            <person name="Krogh S."/>
            <person name="Kumano M."/>
            <person name="Kurita K."/>
            <person name="Lapidus A."/>
            <person name="Lardinois S."/>
            <person name="Lauber J."/>
            <person name="Lazarevic V."/>
            <person name="Lee S.-M."/>
            <person name="Levine A."/>
            <person name="Liu H."/>
            <person name="Masuda S."/>
            <person name="Mauel C."/>
            <person name="Medigue C."/>
            <person name="Medina N."/>
            <person name="Mellado R.P."/>
            <person name="Mizuno M."/>
            <person name="Moestl D."/>
            <person name="Nakai S."/>
            <person name="Noback M."/>
            <person name="Noone D."/>
            <person name="O'Reilly M."/>
            <person name="Ogawa K."/>
            <person name="Ogiwara A."/>
            <person name="Oudega B."/>
            <person name="Park S.-H."/>
            <person name="Parro V."/>
            <person name="Pohl T.M."/>
            <person name="Portetelle D."/>
            <person name="Porwollik S."/>
            <person name="Prescott A.M."/>
            <person name="Presecan E."/>
            <person name="Pujic P."/>
            <person name="Purnelle B."/>
            <person name="Rapoport G."/>
            <person name="Rey M."/>
            <person name="Reynolds S."/>
            <person name="Rieger M."/>
            <person name="Rivolta C."/>
            <person name="Rocha E."/>
            <person name="Roche B."/>
            <person name="Rose M."/>
            <person name="Sadaie Y."/>
            <person name="Sato T."/>
            <person name="Scanlan E."/>
            <person name="Schleich S."/>
            <person name="Schroeter R."/>
            <person name="Scoffone F."/>
            <person name="Sekiguchi J."/>
            <person name="Sekowska A."/>
            <person name="Seror S.J."/>
            <person name="Serror P."/>
            <person name="Shin B.-S."/>
            <person name="Soldo B."/>
            <person name="Sorokin A."/>
            <person name="Tacconi E."/>
            <person name="Takagi T."/>
            <person name="Takahashi H."/>
            <person name="Takemaru K."/>
            <person name="Takeuchi M."/>
            <person name="Tamakoshi A."/>
            <person name="Tanaka T."/>
            <person name="Terpstra P."/>
            <person name="Tognoni A."/>
            <person name="Tosato V."/>
            <person name="Uchiyama S."/>
            <person name="Vandenbol M."/>
            <person name="Vannier F."/>
            <person name="Vassarotti A."/>
            <person name="Viari A."/>
            <person name="Wambutt R."/>
            <person name="Wedler E."/>
            <person name="Wedler H."/>
            <person name="Weitzenegger T."/>
            <person name="Winters P."/>
            <person name="Wipat A."/>
            <person name="Yamamoto H."/>
            <person name="Yamane K."/>
            <person name="Yasumoto K."/>
            <person name="Yata K."/>
            <person name="Yoshida K."/>
            <person name="Yoshikawa H.-F."/>
            <person name="Zumstein E."/>
            <person name="Yoshikawa H."/>
            <person name="Danchin A."/>
        </authorList>
    </citation>
    <scope>NUCLEOTIDE SEQUENCE [LARGE SCALE GENOMIC DNA]</scope>
    <source>
        <strain>168</strain>
    </source>
</reference>
<reference key="3">
    <citation type="journal article" date="2009" name="Microbiology">
        <title>From a consortium sequence to a unified sequence: the Bacillus subtilis 168 reference genome a decade later.</title>
        <authorList>
            <person name="Barbe V."/>
            <person name="Cruveiller S."/>
            <person name="Kunst F."/>
            <person name="Lenoble P."/>
            <person name="Meurice G."/>
            <person name="Sekowska A."/>
            <person name="Vallenet D."/>
            <person name="Wang T."/>
            <person name="Moszer I."/>
            <person name="Medigue C."/>
            <person name="Danchin A."/>
        </authorList>
    </citation>
    <scope>SEQUENCE REVISION TO N- AND C-TERMINUS</scope>
</reference>
<reference key="4">
    <citation type="journal article" date="2013" name="J. Bacteriol.">
        <title>A genomic signature and the identification of new sporulation genes.</title>
        <authorList>
            <person name="Abecasis A.B."/>
            <person name="Serrano M."/>
            <person name="Alves R."/>
            <person name="Quintais L."/>
            <person name="Pereira-Leal J.B."/>
            <person name="Henriques A.O."/>
        </authorList>
    </citation>
    <scope>DEVELOPMENTAL STAGE</scope>
    <scope>INDUCTION</scope>
    <scope>DISRUPTION PHENOTYPE</scope>
</reference>
<proteinExistence type="evidence at transcript level"/>
<evidence type="ECO:0000255" key="1"/>
<evidence type="ECO:0000269" key="2">
    <source>
    </source>
</evidence>
<evidence type="ECO:0000305" key="3"/>
<keyword id="KW-1003">Cell membrane</keyword>
<keyword id="KW-0472">Membrane</keyword>
<keyword id="KW-1185">Reference proteome</keyword>
<keyword id="KW-0749">Sporulation</keyword>
<keyword id="KW-0812">Transmembrane</keyword>
<keyword id="KW-1133">Transmembrane helix</keyword>
<gene>
    <name type="primary">ytaF</name>
    <name type="ordered locus">BSU29070</name>
</gene>
<protein>
    <recommendedName>
        <fullName evidence="3">Probable sporulation protein YtaF</fullName>
    </recommendedName>
</protein>
<dbReference type="EMBL" id="AF008220">
    <property type="protein sequence ID" value="AAC00352.1"/>
    <property type="status" value="ALT_SEQ"/>
    <property type="molecule type" value="Genomic_DNA"/>
</dbReference>
<dbReference type="EMBL" id="AL009126">
    <property type="protein sequence ID" value="CAB14867.2"/>
    <property type="molecule type" value="Genomic_DNA"/>
</dbReference>
<dbReference type="RefSeq" id="WP_003229449.1">
    <property type="nucleotide sequence ID" value="NZ_CP053102.1"/>
</dbReference>
<dbReference type="FunCoup" id="C0SP79">
    <property type="interactions" value="4"/>
</dbReference>
<dbReference type="STRING" id="224308.BSU29070"/>
<dbReference type="PaxDb" id="224308-BSU29070"/>
<dbReference type="EnsemblBacteria" id="CAB14867">
    <property type="protein sequence ID" value="CAB14867"/>
    <property type="gene ID" value="BSU_29070"/>
</dbReference>
<dbReference type="GeneID" id="86872576"/>
<dbReference type="GeneID" id="937389"/>
<dbReference type="KEGG" id="bsu:BSU29070"/>
<dbReference type="PATRIC" id="fig|224308.43.peg.3041"/>
<dbReference type="eggNOG" id="COG1971">
    <property type="taxonomic scope" value="Bacteria"/>
</dbReference>
<dbReference type="InParanoid" id="C0SP79"/>
<dbReference type="OrthoDB" id="1679205at2"/>
<dbReference type="PhylomeDB" id="C0SP79"/>
<dbReference type="BioCyc" id="BSUB:BSU29070-MONOMER"/>
<dbReference type="Proteomes" id="UP000001570">
    <property type="component" value="Chromosome"/>
</dbReference>
<dbReference type="GO" id="GO:0005886">
    <property type="term" value="C:plasma membrane"/>
    <property type="evidence" value="ECO:0000318"/>
    <property type="project" value="GO_Central"/>
</dbReference>
<dbReference type="GO" id="GO:0005384">
    <property type="term" value="F:manganese ion transmembrane transporter activity"/>
    <property type="evidence" value="ECO:0000318"/>
    <property type="project" value="GO_Central"/>
</dbReference>
<dbReference type="GO" id="GO:0030026">
    <property type="term" value="P:intracellular manganese ion homeostasis"/>
    <property type="evidence" value="ECO:0000318"/>
    <property type="project" value="GO_Central"/>
</dbReference>
<dbReference type="GO" id="GO:0140048">
    <property type="term" value="P:manganese ion export across plasma membrane"/>
    <property type="evidence" value="ECO:0000318"/>
    <property type="project" value="GO_Central"/>
</dbReference>
<dbReference type="GO" id="GO:0030435">
    <property type="term" value="P:sporulation resulting in formation of a cellular spore"/>
    <property type="evidence" value="ECO:0007669"/>
    <property type="project" value="UniProtKB-KW"/>
</dbReference>
<dbReference type="InterPro" id="IPR003810">
    <property type="entry name" value="Mntp/YtaF"/>
</dbReference>
<dbReference type="InterPro" id="IPR014205">
    <property type="entry name" value="Spore_YtaF"/>
</dbReference>
<dbReference type="NCBIfam" id="TIGR02840">
    <property type="entry name" value="spore_YtaF"/>
    <property type="match status" value="1"/>
</dbReference>
<dbReference type="PANTHER" id="PTHR35529">
    <property type="entry name" value="MANGANESE EFFLUX PUMP MNTP-RELATED"/>
    <property type="match status" value="1"/>
</dbReference>
<dbReference type="PANTHER" id="PTHR35529:SF2">
    <property type="entry name" value="SPORULATION PROTEIN YTAF-RELATED"/>
    <property type="match status" value="1"/>
</dbReference>
<dbReference type="Pfam" id="PF02659">
    <property type="entry name" value="Mntp"/>
    <property type="match status" value="2"/>
</dbReference>
<comment type="subcellular location">
    <subcellularLocation>
        <location evidence="3">Cell membrane</location>
        <topology evidence="3">Multi-pass membrane protein</topology>
    </subcellularLocation>
</comment>
<comment type="developmental stage">
    <text evidence="2">Expressed in the mother cell during sporulation.</text>
</comment>
<comment type="induction">
    <text evidence="2">Expression is regulated by the sporulation transcription factor sigma E.</text>
</comment>
<comment type="disruption phenotype">
    <text evidence="2">Disruption of the gene causes a 10-fold reduction in the efficiency of sporulation. Mutants divide asymmetrically but fail to complete engulfment of the forespore by the mother cell.</text>
</comment>
<comment type="sequence caution" evidence="3">
    <conflict type="erroneous initiation">
        <sequence resource="EMBL-CDS" id="AAC00352"/>
    </conflict>
    <text>Truncated N-terminus.</text>
</comment>
<comment type="sequence caution" evidence="3">
    <conflict type="frameshift">
        <sequence resource="EMBL-CDS" id="AAC00352"/>
    </conflict>
</comment>
<accession>C0SP79</accession>
<accession>O34547</accession>
<accession>Q795V6</accession>
<organism>
    <name type="scientific">Bacillus subtilis (strain 168)</name>
    <dbReference type="NCBI Taxonomy" id="224308"/>
    <lineage>
        <taxon>Bacteria</taxon>
        <taxon>Bacillati</taxon>
        <taxon>Bacillota</taxon>
        <taxon>Bacilli</taxon>
        <taxon>Bacillales</taxon>
        <taxon>Bacillaceae</taxon>
        <taxon>Bacillus</taxon>
    </lineage>
</organism>
<sequence>MQMVSILLLALAVSLDSFSVGFTYGLRKMKIPFKAILVIACCSGAVMFISMLIGSFLTKFFPVYVTEKLGGLILVGIGAWVLYQFFKPAKDKEYLLHEKTLLNLEVRSLGIVIHILRKPMSADIDKSGVINGIEAVLLGFALSIDAFGAGIGAAILGFSPIVMSIAVAIMSSLFVSIGINAGHFLSKWKWIDKMAFLPGLLLITIGLWKL</sequence>
<feature type="chain" id="PRO_0000389489" description="Probable sporulation protein YtaF">
    <location>
        <begin position="1"/>
        <end position="210"/>
    </location>
</feature>
<feature type="transmembrane region" description="Helical" evidence="1">
    <location>
        <begin position="6"/>
        <end position="26"/>
    </location>
</feature>
<feature type="transmembrane region" description="Helical" evidence="1">
    <location>
        <begin position="36"/>
        <end position="56"/>
    </location>
</feature>
<feature type="transmembrane region" description="Helical" evidence="1">
    <location>
        <begin position="69"/>
        <end position="89"/>
    </location>
</feature>
<feature type="transmembrane region" description="Helical" evidence="1">
    <location>
        <begin position="129"/>
        <end position="149"/>
    </location>
</feature>
<feature type="transmembrane region" description="Helical" evidence="1">
    <location>
        <begin position="162"/>
        <end position="184"/>
    </location>
</feature>
<feature type="transmembrane region" description="Helical" evidence="1">
    <location>
        <begin position="190"/>
        <end position="210"/>
    </location>
</feature>
<name>YTAF_BACSU</name>